<evidence type="ECO:0000250" key="1">
    <source>
        <dbReference type="UniProtKB" id="Q6P2E9"/>
    </source>
</evidence>
<evidence type="ECO:0000255" key="2"/>
<evidence type="ECO:0000256" key="3">
    <source>
        <dbReference type="SAM" id="MobiDB-lite"/>
    </source>
</evidence>
<evidence type="ECO:0000269" key="4">
    <source>
    </source>
</evidence>
<evidence type="ECO:0000269" key="5">
    <source>
    </source>
</evidence>
<evidence type="ECO:0000269" key="6">
    <source>
    </source>
</evidence>
<evidence type="ECO:0000303" key="7">
    <source>
    </source>
</evidence>
<evidence type="ECO:0000305" key="8"/>
<evidence type="ECO:0000312" key="9">
    <source>
        <dbReference type="MGI" id="MGI:2446249"/>
    </source>
</evidence>
<evidence type="ECO:0007744" key="10">
    <source>
    </source>
</evidence>
<evidence type="ECO:0007744" key="11">
    <source>
    </source>
</evidence>
<gene>
    <name evidence="9" type="primary">Edc4</name>
</gene>
<dbReference type="EMBL" id="AK146527">
    <property type="protein sequence ID" value="BAE27236.1"/>
    <property type="molecule type" value="mRNA"/>
</dbReference>
<dbReference type="EMBL" id="AK152963">
    <property type="protein sequence ID" value="BAE31626.1"/>
    <property type="molecule type" value="mRNA"/>
</dbReference>
<dbReference type="EMBL" id="BC022641">
    <property type="protein sequence ID" value="AAH22641.1"/>
    <property type="molecule type" value="mRNA"/>
</dbReference>
<dbReference type="EMBL" id="BC053081">
    <property type="protein sequence ID" value="AAH53081.1"/>
    <property type="molecule type" value="mRNA"/>
</dbReference>
<dbReference type="CCDS" id="CCDS52662.1">
    <molecule id="Q3UJB9-2"/>
</dbReference>
<dbReference type="CCDS" id="CCDS80923.1">
    <molecule id="Q3UJB9-1"/>
</dbReference>
<dbReference type="RefSeq" id="NP_001288029.1">
    <property type="nucleotide sequence ID" value="NM_001301100.1"/>
</dbReference>
<dbReference type="RefSeq" id="NP_853625.1">
    <property type="nucleotide sequence ID" value="NM_181594.3"/>
</dbReference>
<dbReference type="SMR" id="Q3UJB9"/>
<dbReference type="BioGRID" id="231562">
    <property type="interactions" value="38"/>
</dbReference>
<dbReference type="FunCoup" id="Q3UJB9">
    <property type="interactions" value="3368"/>
</dbReference>
<dbReference type="IntAct" id="Q3UJB9">
    <property type="interactions" value="28"/>
</dbReference>
<dbReference type="MINT" id="Q3UJB9"/>
<dbReference type="STRING" id="10090.ENSMUSP00000039134"/>
<dbReference type="ChEMBL" id="CHEMBL4879464"/>
<dbReference type="GlyGen" id="Q3UJB9">
    <property type="glycosylation" value="4 sites, 2 N-linked glycans (2 sites), 1 O-linked glycan (1 site)"/>
</dbReference>
<dbReference type="iPTMnet" id="Q3UJB9"/>
<dbReference type="PhosphoSitePlus" id="Q3UJB9"/>
<dbReference type="SwissPalm" id="Q3UJB9"/>
<dbReference type="jPOST" id="Q3UJB9"/>
<dbReference type="PaxDb" id="10090-ENSMUSP00000039134"/>
<dbReference type="PeptideAtlas" id="Q3UJB9"/>
<dbReference type="ProteomicsDB" id="277677">
    <molecule id="Q3UJB9-1"/>
</dbReference>
<dbReference type="ProteomicsDB" id="277678">
    <molecule id="Q3UJB9-2"/>
</dbReference>
<dbReference type="Pumba" id="Q3UJB9"/>
<dbReference type="GeneID" id="234699"/>
<dbReference type="KEGG" id="mmu:234699"/>
<dbReference type="UCSC" id="uc009nek.2">
    <molecule id="Q3UJB9-2"/>
    <property type="organism name" value="mouse"/>
</dbReference>
<dbReference type="AGR" id="MGI:2446249"/>
<dbReference type="CTD" id="23644"/>
<dbReference type="MGI" id="MGI:2446249">
    <property type="gene designation" value="Edc4"/>
</dbReference>
<dbReference type="eggNOG" id="KOG1916">
    <property type="taxonomic scope" value="Eukaryota"/>
</dbReference>
<dbReference type="InParanoid" id="Q3UJB9"/>
<dbReference type="OrthoDB" id="21128at2759"/>
<dbReference type="PhylomeDB" id="Q3UJB9"/>
<dbReference type="Reactome" id="R-MMU-430039">
    <property type="pathway name" value="mRNA decay by 5' to 3' exoribonuclease"/>
</dbReference>
<dbReference type="BioGRID-ORCS" id="234699">
    <property type="hits" value="19 hits in 79 CRISPR screens"/>
</dbReference>
<dbReference type="ChiTaRS" id="Edc4">
    <property type="organism name" value="mouse"/>
</dbReference>
<dbReference type="PRO" id="PR:Q3UJB9"/>
<dbReference type="Proteomes" id="UP000000589">
    <property type="component" value="Unplaced"/>
</dbReference>
<dbReference type="RNAct" id="Q3UJB9">
    <property type="molecule type" value="protein"/>
</dbReference>
<dbReference type="GO" id="GO:0005634">
    <property type="term" value="C:nucleus"/>
    <property type="evidence" value="ECO:0007669"/>
    <property type="project" value="UniProtKB-SubCell"/>
</dbReference>
<dbReference type="GO" id="GO:0000932">
    <property type="term" value="C:P-body"/>
    <property type="evidence" value="ECO:0000266"/>
    <property type="project" value="MGI"/>
</dbReference>
<dbReference type="GO" id="GO:0031087">
    <property type="term" value="P:deadenylation-independent decapping of nuclear-transcribed mRNA"/>
    <property type="evidence" value="ECO:0007669"/>
    <property type="project" value="InterPro"/>
</dbReference>
<dbReference type="FunFam" id="1.10.220.100:FF:000001">
    <property type="entry name" value="Enhancer of mRNA-decapping protein 4"/>
    <property type="match status" value="1"/>
</dbReference>
<dbReference type="FunFam" id="2.130.10.10:FF:000138">
    <property type="entry name" value="Enhancer of mRNA-decapping protein 4"/>
    <property type="match status" value="1"/>
</dbReference>
<dbReference type="Gene3D" id="6.10.140.270">
    <property type="match status" value="1"/>
</dbReference>
<dbReference type="Gene3D" id="1.10.220.100">
    <property type="entry name" value="conserved c-terminal region of ge- 1"/>
    <property type="match status" value="1"/>
</dbReference>
<dbReference type="Gene3D" id="2.130.10.10">
    <property type="entry name" value="YVTN repeat-like/Quinoprotein amine dehydrogenase"/>
    <property type="match status" value="1"/>
</dbReference>
<dbReference type="InterPro" id="IPR045152">
    <property type="entry name" value="EDC4-like"/>
</dbReference>
<dbReference type="InterPro" id="IPR049404">
    <property type="entry name" value="EDC4_C"/>
</dbReference>
<dbReference type="InterPro" id="IPR044938">
    <property type="entry name" value="EDC4_C_sf"/>
</dbReference>
<dbReference type="InterPro" id="IPR032401">
    <property type="entry name" value="EDC4_WD40"/>
</dbReference>
<dbReference type="InterPro" id="IPR015943">
    <property type="entry name" value="WD40/YVTN_repeat-like_dom_sf"/>
</dbReference>
<dbReference type="InterPro" id="IPR036322">
    <property type="entry name" value="WD40_repeat_dom_sf"/>
</dbReference>
<dbReference type="InterPro" id="IPR001680">
    <property type="entry name" value="WD40_rpt"/>
</dbReference>
<dbReference type="PANTHER" id="PTHR15598">
    <property type="entry name" value="ENHANCER OF MRNA-DECAPPING PROTEIN 4"/>
    <property type="match status" value="1"/>
</dbReference>
<dbReference type="PANTHER" id="PTHR15598:SF5">
    <property type="entry name" value="ENHANCER OF MRNA-DECAPPING PROTEIN 4"/>
    <property type="match status" value="1"/>
</dbReference>
<dbReference type="Pfam" id="PF21289">
    <property type="entry name" value="EDC4_C"/>
    <property type="match status" value="1"/>
</dbReference>
<dbReference type="Pfam" id="PF16529">
    <property type="entry name" value="Ge1_WD40"/>
    <property type="match status" value="1"/>
</dbReference>
<dbReference type="SMART" id="SM00320">
    <property type="entry name" value="WD40"/>
    <property type="match status" value="3"/>
</dbReference>
<dbReference type="SUPFAM" id="SSF50978">
    <property type="entry name" value="WD40 repeat-like"/>
    <property type="match status" value="1"/>
</dbReference>
<dbReference type="PROSITE" id="PS50082">
    <property type="entry name" value="WD_REPEATS_2"/>
    <property type="match status" value="1"/>
</dbReference>
<dbReference type="PROSITE" id="PS50294">
    <property type="entry name" value="WD_REPEATS_REGION"/>
    <property type="match status" value="1"/>
</dbReference>
<accession>Q3UJB9</accession>
<accession>Q3U6U8</accession>
<accession>Q7TS78</accession>
<accession>Q8R223</accession>
<sequence>MASCASIDIEDATQHLRDILKLDRPAGGSNAESQRPSSAYNGDLNGLLVPDPLSSGDGNSTNKPGIRTMPPINLQEKQVICLSGDDSSTCIGILAKEVEIVASSDSSISSKARGSNKVKIQPVAKYDWEQKYYYGNLIAVSNSFLAYAIRAANNGSAMVRVISVSTSERTLLKGFTGSVADLAFAHLNSPQLACLDEAGNLFVWRLALVKGKIQEEILVHIRQPEGTALNHFRRIIWCPFIPEESEDCCEESSPTVALLHEDRAEVWDLDMLRSSHNTWPVDVSQIKQGFIVVKGHSTCLSEGALSPDGTVLATASHDGFVKFWQIYIEGQDEPRCLHEWKPHDGRPLSCLLFCDNHKKQDPEVPFWRFLITGADQNRELKMWCTVSWTCLQTIRFSPDIFSSVSVPPSLKVCLDLSAEYLILSDVQRKVLYVMELLQNQDEGRACFSSISEFLLTHPVLSFGIQVVSRCRLRHTEVLPAEEENDSLGTESSHGAGALESAAGVLIKLFCVHTKALQDVQIRFQPQLNPDVVAPLSTHTAHEDFTFGESRPELGSEGLASAAHGSQPDLRRIVELPAPADFLSLSSETKPELMTPDAFMTPTASLQQISASPSSSSSSSSSSSSSSSSSSSSLTAVSAVSSSSAMDPSLPRPPEELTLSPKLQLDGSLTLNSSSSSLQASPRSLLPGLLPGPADKLISKGPGQVSTAASALSLDLQEVEPLGLPQASPSRTRSPDVISSASTALSQDIPEIASEALSRGFGSSVPEGLIEPNSMASAASALHLLSPRPRQGPELGSQLGLDGGPGDGDRHSTPSLLEAALTQEVATPDSQVWPTAPDITRETCSTLTESPRNGLQEKHKSLAFHRPPYHLLQQRDSQDTSAEQSDHDDEVASLASASGGFGSKIPTPRLPSKDWKTKGSPRTSPKLKRKSKKDDGDSAVGSRLTEHQVAEPPEDWPALIWQQQRELAELWHNQEELLQRLCAQLEGLQSTVTDHVERALETRHEQEQRRLERALAEGQQRGGQLQEQLTQQLSQALSSAVAGRLERSVRDEIKKTVPPCVSRSLEPVAGQLSNSVATKLTAVEGSMKENISKLLKSKNLTDAIARAAADTLQGPMQAAYREAFQSVVLPAFEKSCQAMFQQINDSFRLGTQEYLQQLESHMKSRKAREQEAREPVLAQLRGLVSTLQSATEQMAATVSSSVRAEVQHQLHVAVGSLQESILAQVQRIVKGEVSVALKEQQATVTSSIMQAMRSAAGTPVPSAHLDCQAQQAHILQLLQQGHLNQAFQQALTAADLNLVLYVCETVDPAQVFGQPPCPLSQPVLLSLIQQLASDLGTRSDLKLSYLEEAVMHLDHSDPITRDHMGSVMAQVRQKLFQFLQADPHNSLSKAARRLSLMLHGLVTPSLP</sequence>
<organism>
    <name type="scientific">Mus musculus</name>
    <name type="common">Mouse</name>
    <dbReference type="NCBI Taxonomy" id="10090"/>
    <lineage>
        <taxon>Eukaryota</taxon>
        <taxon>Metazoa</taxon>
        <taxon>Chordata</taxon>
        <taxon>Craniata</taxon>
        <taxon>Vertebrata</taxon>
        <taxon>Euteleostomi</taxon>
        <taxon>Mammalia</taxon>
        <taxon>Eutheria</taxon>
        <taxon>Euarchontoglires</taxon>
        <taxon>Glires</taxon>
        <taxon>Rodentia</taxon>
        <taxon>Myomorpha</taxon>
        <taxon>Muroidea</taxon>
        <taxon>Muridae</taxon>
        <taxon>Murinae</taxon>
        <taxon>Mus</taxon>
        <taxon>Mus</taxon>
    </lineage>
</organism>
<name>EDC4_MOUSE</name>
<proteinExistence type="evidence at protein level"/>
<reference key="1">
    <citation type="journal article" date="2005" name="Science">
        <title>The transcriptional landscape of the mammalian genome.</title>
        <authorList>
            <person name="Carninci P."/>
            <person name="Kasukawa T."/>
            <person name="Katayama S."/>
            <person name="Gough J."/>
            <person name="Frith M.C."/>
            <person name="Maeda N."/>
            <person name="Oyama R."/>
            <person name="Ravasi T."/>
            <person name="Lenhard B."/>
            <person name="Wells C."/>
            <person name="Kodzius R."/>
            <person name="Shimokawa K."/>
            <person name="Bajic V.B."/>
            <person name="Brenner S.E."/>
            <person name="Batalov S."/>
            <person name="Forrest A.R."/>
            <person name="Zavolan M."/>
            <person name="Davis M.J."/>
            <person name="Wilming L.G."/>
            <person name="Aidinis V."/>
            <person name="Allen J.E."/>
            <person name="Ambesi-Impiombato A."/>
            <person name="Apweiler R."/>
            <person name="Aturaliya R.N."/>
            <person name="Bailey T.L."/>
            <person name="Bansal M."/>
            <person name="Baxter L."/>
            <person name="Beisel K.W."/>
            <person name="Bersano T."/>
            <person name="Bono H."/>
            <person name="Chalk A.M."/>
            <person name="Chiu K.P."/>
            <person name="Choudhary V."/>
            <person name="Christoffels A."/>
            <person name="Clutterbuck D.R."/>
            <person name="Crowe M.L."/>
            <person name="Dalla E."/>
            <person name="Dalrymple B.P."/>
            <person name="de Bono B."/>
            <person name="Della Gatta G."/>
            <person name="di Bernardo D."/>
            <person name="Down T."/>
            <person name="Engstrom P."/>
            <person name="Fagiolini M."/>
            <person name="Faulkner G."/>
            <person name="Fletcher C.F."/>
            <person name="Fukushima T."/>
            <person name="Furuno M."/>
            <person name="Futaki S."/>
            <person name="Gariboldi M."/>
            <person name="Georgii-Hemming P."/>
            <person name="Gingeras T.R."/>
            <person name="Gojobori T."/>
            <person name="Green R.E."/>
            <person name="Gustincich S."/>
            <person name="Harbers M."/>
            <person name="Hayashi Y."/>
            <person name="Hensch T.K."/>
            <person name="Hirokawa N."/>
            <person name="Hill D."/>
            <person name="Huminiecki L."/>
            <person name="Iacono M."/>
            <person name="Ikeo K."/>
            <person name="Iwama A."/>
            <person name="Ishikawa T."/>
            <person name="Jakt M."/>
            <person name="Kanapin A."/>
            <person name="Katoh M."/>
            <person name="Kawasawa Y."/>
            <person name="Kelso J."/>
            <person name="Kitamura H."/>
            <person name="Kitano H."/>
            <person name="Kollias G."/>
            <person name="Krishnan S.P."/>
            <person name="Kruger A."/>
            <person name="Kummerfeld S.K."/>
            <person name="Kurochkin I.V."/>
            <person name="Lareau L.F."/>
            <person name="Lazarevic D."/>
            <person name="Lipovich L."/>
            <person name="Liu J."/>
            <person name="Liuni S."/>
            <person name="McWilliam S."/>
            <person name="Madan Babu M."/>
            <person name="Madera M."/>
            <person name="Marchionni L."/>
            <person name="Matsuda H."/>
            <person name="Matsuzawa S."/>
            <person name="Miki H."/>
            <person name="Mignone F."/>
            <person name="Miyake S."/>
            <person name="Morris K."/>
            <person name="Mottagui-Tabar S."/>
            <person name="Mulder N."/>
            <person name="Nakano N."/>
            <person name="Nakauchi H."/>
            <person name="Ng P."/>
            <person name="Nilsson R."/>
            <person name="Nishiguchi S."/>
            <person name="Nishikawa S."/>
            <person name="Nori F."/>
            <person name="Ohara O."/>
            <person name="Okazaki Y."/>
            <person name="Orlando V."/>
            <person name="Pang K.C."/>
            <person name="Pavan W.J."/>
            <person name="Pavesi G."/>
            <person name="Pesole G."/>
            <person name="Petrovsky N."/>
            <person name="Piazza S."/>
            <person name="Reed J."/>
            <person name="Reid J.F."/>
            <person name="Ring B.Z."/>
            <person name="Ringwald M."/>
            <person name="Rost B."/>
            <person name="Ruan Y."/>
            <person name="Salzberg S.L."/>
            <person name="Sandelin A."/>
            <person name="Schneider C."/>
            <person name="Schoenbach C."/>
            <person name="Sekiguchi K."/>
            <person name="Semple C.A."/>
            <person name="Seno S."/>
            <person name="Sessa L."/>
            <person name="Sheng Y."/>
            <person name="Shibata Y."/>
            <person name="Shimada H."/>
            <person name="Shimada K."/>
            <person name="Silva D."/>
            <person name="Sinclair B."/>
            <person name="Sperling S."/>
            <person name="Stupka E."/>
            <person name="Sugiura K."/>
            <person name="Sultana R."/>
            <person name="Takenaka Y."/>
            <person name="Taki K."/>
            <person name="Tammoja K."/>
            <person name="Tan S.L."/>
            <person name="Tang S."/>
            <person name="Taylor M.S."/>
            <person name="Tegner J."/>
            <person name="Teichmann S.A."/>
            <person name="Ueda H.R."/>
            <person name="van Nimwegen E."/>
            <person name="Verardo R."/>
            <person name="Wei C.L."/>
            <person name="Yagi K."/>
            <person name="Yamanishi H."/>
            <person name="Zabarovsky E."/>
            <person name="Zhu S."/>
            <person name="Zimmer A."/>
            <person name="Hide W."/>
            <person name="Bult C."/>
            <person name="Grimmond S.M."/>
            <person name="Teasdale R.D."/>
            <person name="Liu E.T."/>
            <person name="Brusic V."/>
            <person name="Quackenbush J."/>
            <person name="Wahlestedt C."/>
            <person name="Mattick J.S."/>
            <person name="Hume D.A."/>
            <person name="Kai C."/>
            <person name="Sasaki D."/>
            <person name="Tomaru Y."/>
            <person name="Fukuda S."/>
            <person name="Kanamori-Katayama M."/>
            <person name="Suzuki M."/>
            <person name="Aoki J."/>
            <person name="Arakawa T."/>
            <person name="Iida J."/>
            <person name="Imamura K."/>
            <person name="Itoh M."/>
            <person name="Kato T."/>
            <person name="Kawaji H."/>
            <person name="Kawagashira N."/>
            <person name="Kawashima T."/>
            <person name="Kojima M."/>
            <person name="Kondo S."/>
            <person name="Konno H."/>
            <person name="Nakano K."/>
            <person name="Ninomiya N."/>
            <person name="Nishio T."/>
            <person name="Okada M."/>
            <person name="Plessy C."/>
            <person name="Shibata K."/>
            <person name="Shiraki T."/>
            <person name="Suzuki S."/>
            <person name="Tagami M."/>
            <person name="Waki K."/>
            <person name="Watahiki A."/>
            <person name="Okamura-Oho Y."/>
            <person name="Suzuki H."/>
            <person name="Kawai J."/>
            <person name="Hayashizaki Y."/>
        </authorList>
    </citation>
    <scope>NUCLEOTIDE SEQUENCE [LARGE SCALE MRNA] (ISOFORM 1)</scope>
    <source>
        <strain>C57BL/6J</strain>
        <tissue>Bone marrow</tissue>
        <tissue>Kidney</tissue>
    </source>
</reference>
<reference key="2">
    <citation type="journal article" date="2004" name="Genome Res.">
        <title>The status, quality, and expansion of the NIH full-length cDNA project: the Mammalian Gene Collection (MGC).</title>
        <authorList>
            <consortium name="The MGC Project Team"/>
        </authorList>
    </citation>
    <scope>NUCLEOTIDE SEQUENCE [LARGE SCALE MRNA] (ISOFORM 2)</scope>
    <source>
        <strain>C57BL/6J</strain>
        <strain>FVB/N</strain>
        <tissue>Brain</tissue>
        <tissue>Colon</tissue>
    </source>
</reference>
<reference key="3">
    <citation type="journal article" date="2007" name="Proc. Natl. Acad. Sci. U.S.A.">
        <title>Large-scale phosphorylation analysis of mouse liver.</title>
        <authorList>
            <person name="Villen J."/>
            <person name="Beausoleil S.A."/>
            <person name="Gerber S.A."/>
            <person name="Gygi S.P."/>
        </authorList>
    </citation>
    <scope>PHOSPHORYLATION [LARGE SCALE ANALYSIS] AT SER-892</scope>
    <scope>IDENTIFICATION BY MASS SPECTROMETRY [LARGE SCALE ANALYSIS]</scope>
    <source>
        <tissue>Liver</tissue>
    </source>
</reference>
<reference key="4">
    <citation type="journal article" date="2009" name="Immunity">
        <title>The phagosomal proteome in interferon-gamma-activated macrophages.</title>
        <authorList>
            <person name="Trost M."/>
            <person name="English L."/>
            <person name="Lemieux S."/>
            <person name="Courcelles M."/>
            <person name="Desjardins M."/>
            <person name="Thibault P."/>
        </authorList>
    </citation>
    <scope>IDENTIFICATION BY MASS SPECTROMETRY [LARGE SCALE ANALYSIS]</scope>
</reference>
<reference key="5">
    <citation type="journal article" date="2009" name="Mol. Cell. Proteomics">
        <title>Large scale localization of protein phosphorylation by use of electron capture dissociation mass spectrometry.</title>
        <authorList>
            <person name="Sweet S.M."/>
            <person name="Bailey C.M."/>
            <person name="Cunningham D.L."/>
            <person name="Heath J.K."/>
            <person name="Cooper H.J."/>
        </authorList>
    </citation>
    <scope>IDENTIFICATION BY MASS SPECTROMETRY [LARGE SCALE ANALYSIS]</scope>
    <source>
        <tissue>Embryonic fibroblast</tissue>
    </source>
</reference>
<reference key="6">
    <citation type="journal article" date="2010" name="Cell">
        <title>A tissue-specific atlas of mouse protein phosphorylation and expression.</title>
        <authorList>
            <person name="Huttlin E.L."/>
            <person name="Jedrychowski M.P."/>
            <person name="Elias J.E."/>
            <person name="Goswami T."/>
            <person name="Rad R."/>
            <person name="Beausoleil S.A."/>
            <person name="Villen J."/>
            <person name="Haas W."/>
            <person name="Sowa M.E."/>
            <person name="Gygi S.P."/>
        </authorList>
    </citation>
    <scope>PHOSPHORYLATION [LARGE SCALE ANALYSIS] AT SER-680; THR-731; SER-745; THR-879; SER-884; SER-892; SER-895 AND THR-906</scope>
    <scope>IDENTIFICATION BY MASS SPECTROMETRY [LARGE SCALE ANALYSIS]</scope>
    <source>
        <tissue>Brain</tissue>
        <tissue>Brown adipose tissue</tissue>
        <tissue>Heart</tissue>
        <tissue>Kidney</tissue>
        <tissue>Liver</tissue>
        <tissue>Lung</tissue>
        <tissue>Pancreas</tissue>
        <tissue>Spleen</tissue>
        <tissue>Testis</tissue>
    </source>
</reference>
<reference key="7">
    <citation type="journal article" date="2010" name="Nat. Immunol.">
        <title>Roquin binds inducible costimulator mRNA and effectors of mRNA decay to induce microRNA-independent post-transcriptional repression.</title>
        <authorList>
            <person name="Glasmacher E."/>
            <person name="Hoefig K.P."/>
            <person name="Vogel K.U."/>
            <person name="Rath N."/>
            <person name="Du L."/>
            <person name="Wolf C."/>
            <person name="Kremmer E."/>
            <person name="Wang X."/>
            <person name="Heissmeyer V."/>
        </authorList>
    </citation>
    <scope>INTERACTION WITH RC3H1</scope>
</reference>
<reference key="8">
    <citation type="journal article" date="2013" name="Immunity">
        <title>Roquin paralogs 1 and 2 redundantly repress the Icos and Ox40 costimulator mRNAs and control follicular helper T cell differentiation.</title>
        <authorList>
            <person name="Vogel K.U."/>
            <person name="Edelmann S.L."/>
            <person name="Jeltsch K.M."/>
            <person name="Bertossi A."/>
            <person name="Heger K."/>
            <person name="Heinz G.A."/>
            <person name="Zoller J."/>
            <person name="Warth S.C."/>
            <person name="Hoefig K.P."/>
            <person name="Lohs C."/>
            <person name="Neff F."/>
            <person name="Kremmer E."/>
            <person name="Schick J."/>
            <person name="Repsilber D."/>
            <person name="Geerlof A."/>
            <person name="Blum H."/>
            <person name="Wurst W."/>
            <person name="Heikenwalder M."/>
            <person name="Schmidt-Supprian M."/>
            <person name="Heissmeyer V."/>
        </authorList>
    </citation>
    <scope>INTERACTION WITH RC3H1</scope>
</reference>
<reference key="9">
    <citation type="journal article" date="2017" name="J. Cell Sci.">
        <title>Tex19 paralogs are new members of the piRNA pathway controlling retrotransposon suppression.</title>
        <authorList>
            <person name="Tarabay Y."/>
            <person name="Achour M."/>
            <person name="Teletin M."/>
            <person name="Ye T."/>
            <person name="Teissandier A."/>
            <person name="Mark M."/>
            <person name="Bourc'his D."/>
            <person name="Viville S."/>
        </authorList>
    </citation>
    <scope>INTERACTION WITH TEX19.1</scope>
</reference>
<protein>
    <recommendedName>
        <fullName evidence="8">Enhancer of mRNA-decapping protein 4</fullName>
    </recommendedName>
</protein>
<keyword id="KW-0007">Acetylation</keyword>
<keyword id="KW-0025">Alternative splicing</keyword>
<keyword id="KW-0175">Coiled coil</keyword>
<keyword id="KW-0963">Cytoplasm</keyword>
<keyword id="KW-0539">Nucleus</keyword>
<keyword id="KW-0597">Phosphoprotein</keyword>
<keyword id="KW-1185">Reference proteome</keyword>
<keyword id="KW-0677">Repeat</keyword>
<keyword id="KW-0853">WD repeat</keyword>
<comment type="function">
    <text evidence="1">In the process of mRNA degradation, seems to play a role in mRNA decapping. Component of a complex containing DCP2 and DCP1A which functions in decapping of ARE-containing mRNAs. Promotes complex formation between DCP1A and DCP2. Enhances the catalytic activity of DCP2 (in vitro).</text>
</comment>
<comment type="subunit">
    <text evidence="1 4 5 6">Part of a decapping complex consisting of DCP1A, DCP2, EDC3, EDC4 and probably DDX6. Part of a complex consisting of DCP1A, EDC3, EDC4 and DDX6. Part of a complex consisting of DCP1B, EDC3, EDC4 and DDX6. Interacts with DCP2 (By similarity). Interacts with RC3H1 (PubMed:20639877, PubMed:23583643). Interacts with NBDY (By similarity). Interacts with Tex19.1 and, probably, Tex19.2 (PubMed:28254886). Interacts with LSM14A (By similarity). Interacts with DDX6 (By similarity).</text>
</comment>
<comment type="interaction">
    <interactant intactId="EBI-2553526">
        <id>Q3UJB9</id>
    </interactant>
    <interactant intactId="EBI-2366263">
        <id>Q4VGL6</id>
        <label>Rc3h1</label>
    </interactant>
    <organismsDiffer>false</organismsDiffer>
    <experiments>3</experiments>
</comment>
<comment type="subcellular location">
    <subcellularLocation>
        <location evidence="1">Cytoplasm</location>
        <location evidence="1">P-body</location>
    </subcellularLocation>
    <subcellularLocation>
        <location evidence="1">Nucleus</location>
    </subcellularLocation>
</comment>
<comment type="alternative products">
    <event type="alternative splicing"/>
    <isoform>
        <id>Q3UJB9-1</id>
        <name>1</name>
        <sequence type="displayed"/>
    </isoform>
    <isoform>
        <id>Q3UJB9-2</id>
        <name>2</name>
        <sequence type="described" ref="VSP_023413"/>
    </isoform>
</comment>
<comment type="similarity">
    <text evidence="8">Belongs to the WD repeat EDC4 family.</text>
</comment>
<feature type="initiator methionine" description="Removed" evidence="1">
    <location>
        <position position="1"/>
    </location>
</feature>
<feature type="chain" id="PRO_0000278963" description="Enhancer of mRNA-decapping protein 4">
    <location>
        <begin position="2"/>
        <end position="1406"/>
    </location>
</feature>
<feature type="repeat" description="WD 1">
    <location>
        <begin position="174"/>
        <end position="214"/>
    </location>
</feature>
<feature type="repeat" description="WD 2">
    <location>
        <begin position="230"/>
        <end position="277"/>
    </location>
</feature>
<feature type="repeat" description="WD 3">
    <location>
        <begin position="295"/>
        <end position="334"/>
    </location>
</feature>
<feature type="repeat" description="WD 4">
    <location>
        <begin position="342"/>
        <end position="393"/>
    </location>
</feature>
<feature type="region of interest" description="Disordered" evidence="3">
    <location>
        <begin position="604"/>
        <end position="631"/>
    </location>
</feature>
<feature type="region of interest" description="Disordered" evidence="3">
    <location>
        <begin position="667"/>
        <end position="686"/>
    </location>
</feature>
<feature type="region of interest" description="Disordered" evidence="3">
    <location>
        <begin position="719"/>
        <end position="744"/>
    </location>
</feature>
<feature type="region of interest" description="Disordered" evidence="3">
    <location>
        <begin position="782"/>
        <end position="855"/>
    </location>
</feature>
<feature type="region of interest" description="Disordered" evidence="3">
    <location>
        <begin position="873"/>
        <end position="951"/>
    </location>
</feature>
<feature type="coiled-coil region" evidence="2">
    <location>
        <begin position="971"/>
        <end position="1030"/>
    </location>
</feature>
<feature type="compositionally biased region" description="Low complexity" evidence="3">
    <location>
        <begin position="609"/>
        <end position="631"/>
    </location>
</feature>
<feature type="compositionally biased region" description="Polar residues" evidence="3">
    <location>
        <begin position="726"/>
        <end position="744"/>
    </location>
</feature>
<feature type="compositionally biased region" description="Polar residues" evidence="3">
    <location>
        <begin position="823"/>
        <end position="832"/>
    </location>
</feature>
<feature type="compositionally biased region" description="Polar residues" evidence="3">
    <location>
        <begin position="841"/>
        <end position="852"/>
    </location>
</feature>
<feature type="modified residue" description="N-acetylalanine" evidence="1">
    <location>
        <position position="2"/>
    </location>
</feature>
<feature type="modified residue" description="Phosphoserine" evidence="1">
    <location>
        <position position="3"/>
    </location>
</feature>
<feature type="modified residue" description="Phosphoserine" evidence="1">
    <location>
        <position position="6"/>
    </location>
</feature>
<feature type="modified residue" description="N6-acetyllysine" evidence="1">
    <location>
        <position position="125"/>
    </location>
</feature>
<feature type="modified residue" description="Phosphoserine" evidence="1">
    <location>
        <position position="560"/>
    </location>
</feature>
<feature type="modified residue" description="Phosphoserine" evidence="1">
    <location>
        <position position="565"/>
    </location>
</feature>
<feature type="modified residue" description="Phosphoserine" evidence="1">
    <location>
        <position position="583"/>
    </location>
</feature>
<feature type="modified residue" description="Phosphoserine" evidence="1">
    <location>
        <position position="585"/>
    </location>
</feature>
<feature type="modified residue" description="Phosphoserine" evidence="11">
    <location>
        <position position="680"/>
    </location>
</feature>
<feature type="modified residue" description="Phosphoserine" evidence="1">
    <location>
        <position position="712"/>
    </location>
</feature>
<feature type="modified residue" description="Phosphoserine" evidence="1">
    <location>
        <position position="727"/>
    </location>
</feature>
<feature type="modified residue" description="Phosphoserine" evidence="1">
    <location>
        <position position="729"/>
    </location>
</feature>
<feature type="modified residue" description="Phosphothreonine" evidence="11">
    <location>
        <position position="731"/>
    </location>
</feature>
<feature type="modified residue" description="Phosphoserine" evidence="1">
    <location>
        <position position="733"/>
    </location>
</feature>
<feature type="modified residue" description="Phosphoserine" evidence="11">
    <location>
        <position position="745"/>
    </location>
</feature>
<feature type="modified residue" description="Phosphothreonine" evidence="1">
    <location>
        <position position="826"/>
    </location>
</feature>
<feature type="modified residue" description="Phosphoserine" evidence="1">
    <location>
        <position position="849"/>
    </location>
</feature>
<feature type="modified residue" description="Phosphoserine" evidence="1">
    <location>
        <position position="876"/>
    </location>
</feature>
<feature type="modified residue" description="Phosphothreonine" evidence="11">
    <location>
        <position position="879"/>
    </location>
</feature>
<feature type="modified residue" description="Phosphoserine" evidence="1">
    <location>
        <position position="880"/>
    </location>
</feature>
<feature type="modified residue" description="Phosphoserine" evidence="11">
    <location>
        <position position="884"/>
    </location>
</feature>
<feature type="modified residue" description="Phosphoserine" evidence="10 11">
    <location>
        <position position="892"/>
    </location>
</feature>
<feature type="modified residue" description="Phosphoserine" evidence="11">
    <location>
        <position position="895"/>
    </location>
</feature>
<feature type="modified residue" description="Phosphoserine" evidence="1">
    <location>
        <position position="897"/>
    </location>
</feature>
<feature type="modified residue" description="Phosphothreonine" evidence="11">
    <location>
        <position position="906"/>
    </location>
</feature>
<feature type="modified residue" description="Phosphoserine" evidence="1">
    <location>
        <position position="1385"/>
    </location>
</feature>
<feature type="splice variant" id="VSP_023413" description="In isoform 2." evidence="7">
    <location>
        <begin position="849"/>
        <end position="864"/>
    </location>
</feature>
<feature type="sequence conflict" description="In Ref. 2; AAH53081." evidence="8" ref="2">
    <original>E</original>
    <variation>K</variation>
    <location>
        <position position="591"/>
    </location>
</feature>
<feature type="sequence conflict" description="In Ref. 2; AAH53081." evidence="8" ref="2">
    <original>N</original>
    <variation>D</variation>
    <location>
        <position position="772"/>
    </location>
</feature>
<feature type="sequence conflict" description="In Ref. 1; BAE27236/BAE31626." evidence="8" ref="1">
    <original>E</original>
    <variation>G</variation>
    <location>
        <position position="1152"/>
    </location>
</feature>